<feature type="chain" id="PRO_0000123260" description="Small ribosomal subunit protein uS11">
    <location>
        <begin position="1"/>
        <end position="130"/>
    </location>
</feature>
<feature type="sequence conflict" description="In Ref. 1; AAD00323." evidence="2" ref="1">
    <original>A</original>
    <variation>G</variation>
    <location>
        <position position="75"/>
    </location>
</feature>
<sequence>MAKPAEKKTKKKIKRVITDGVAHVHASFNNTIVTITDRQGNALSWATSGGAGFRGSRKSTPFAAQVAAEKAGRAALDYGVKSLEVRIKGPGPGRESAVRSLNNVGYKITNIIDVTPIPHNGCRPPKKRRV</sequence>
<protein>
    <recommendedName>
        <fullName evidence="1">Small ribosomal subunit protein uS11</fullName>
    </recommendedName>
    <alternativeName>
        <fullName evidence="2">30S ribosomal protein S11</fullName>
    </alternativeName>
</protein>
<keyword id="KW-1185">Reference proteome</keyword>
<keyword id="KW-0687">Ribonucleoprotein</keyword>
<keyword id="KW-0689">Ribosomal protein</keyword>
<keyword id="KW-0694">RNA-binding</keyword>
<keyword id="KW-0699">rRNA-binding</keyword>
<comment type="function">
    <text evidence="1">Located on the platform of the 30S subunit, it bridges several disparate RNA helices of the 16S rRNA. Forms part of the Shine-Dalgarno cleft in the 70S ribosome.</text>
</comment>
<comment type="subunit">
    <text evidence="1">Part of the 30S ribosomal subunit. Interacts with proteins S7 and S18. Binds to IF-3.</text>
</comment>
<comment type="similarity">
    <text evidence="1">Belongs to the universal ribosomal protein uS11 family.</text>
</comment>
<proteinExistence type="inferred from homology"/>
<reference key="1">
    <citation type="journal article" date="2000" name="Biochim. Biophys. Acta">
        <title>Sequence and molecular analysis of the rpoA cluster genes from Xanthomonas campestris pv. campestris.</title>
        <authorList>
            <person name="Lai J.-Y."/>
            <person name="Huang C.-F."/>
            <person name="Tseng Y.-H."/>
            <person name="Yang M.-T."/>
        </authorList>
    </citation>
    <scope>NUCLEOTIDE SEQUENCE [GENOMIC DNA]</scope>
    <source>
        <strain>Xc11</strain>
    </source>
</reference>
<reference key="2">
    <citation type="journal article" date="2002" name="Nature">
        <title>Comparison of the genomes of two Xanthomonas pathogens with differing host specificities.</title>
        <authorList>
            <person name="da Silva A.C.R."/>
            <person name="Ferro J.A."/>
            <person name="Reinach F.C."/>
            <person name="Farah C.S."/>
            <person name="Furlan L.R."/>
            <person name="Quaggio R.B."/>
            <person name="Monteiro-Vitorello C.B."/>
            <person name="Van Sluys M.A."/>
            <person name="Almeida N.F. Jr."/>
            <person name="Alves L.M.C."/>
            <person name="do Amaral A.M."/>
            <person name="Bertolini M.C."/>
            <person name="Camargo L.E.A."/>
            <person name="Camarotte G."/>
            <person name="Cannavan F."/>
            <person name="Cardozo J."/>
            <person name="Chambergo F."/>
            <person name="Ciapina L.P."/>
            <person name="Cicarelli R.M.B."/>
            <person name="Coutinho L.L."/>
            <person name="Cursino-Santos J.R."/>
            <person name="El-Dorry H."/>
            <person name="Faria J.B."/>
            <person name="Ferreira A.J.S."/>
            <person name="Ferreira R.C.C."/>
            <person name="Ferro M.I.T."/>
            <person name="Formighieri E.F."/>
            <person name="Franco M.C."/>
            <person name="Greggio C.C."/>
            <person name="Gruber A."/>
            <person name="Katsuyama A.M."/>
            <person name="Kishi L.T."/>
            <person name="Leite R.P."/>
            <person name="Lemos E.G.M."/>
            <person name="Lemos M.V.F."/>
            <person name="Locali E.C."/>
            <person name="Machado M.A."/>
            <person name="Madeira A.M.B.N."/>
            <person name="Martinez-Rossi N.M."/>
            <person name="Martins E.C."/>
            <person name="Meidanis J."/>
            <person name="Menck C.F.M."/>
            <person name="Miyaki C.Y."/>
            <person name="Moon D.H."/>
            <person name="Moreira L.M."/>
            <person name="Novo M.T.M."/>
            <person name="Okura V.K."/>
            <person name="Oliveira M.C."/>
            <person name="Oliveira V.R."/>
            <person name="Pereira H.A."/>
            <person name="Rossi A."/>
            <person name="Sena J.A.D."/>
            <person name="Silva C."/>
            <person name="de Souza R.F."/>
            <person name="Spinola L.A.F."/>
            <person name="Takita M.A."/>
            <person name="Tamura R.E."/>
            <person name="Teixeira E.C."/>
            <person name="Tezza R.I.D."/>
            <person name="Trindade dos Santos M."/>
            <person name="Truffi D."/>
            <person name="Tsai S.M."/>
            <person name="White F.F."/>
            <person name="Setubal J.C."/>
            <person name="Kitajima J.P."/>
        </authorList>
    </citation>
    <scope>NUCLEOTIDE SEQUENCE [LARGE SCALE GENOMIC DNA]</scope>
    <source>
        <strain>ATCC 33913 / DSM 3586 / NCPPB 528 / LMG 568 / P 25</strain>
    </source>
</reference>
<gene>
    <name evidence="1" type="primary">rpsK</name>
    <name type="ordered locus">XCC0917</name>
</gene>
<organism>
    <name type="scientific">Xanthomonas campestris pv. campestris (strain ATCC 33913 / DSM 3586 / NCPPB 528 / LMG 568 / P 25)</name>
    <dbReference type="NCBI Taxonomy" id="190485"/>
    <lineage>
        <taxon>Bacteria</taxon>
        <taxon>Pseudomonadati</taxon>
        <taxon>Pseudomonadota</taxon>
        <taxon>Gammaproteobacteria</taxon>
        <taxon>Lysobacterales</taxon>
        <taxon>Lysobacteraceae</taxon>
        <taxon>Xanthomonas</taxon>
    </lineage>
</organism>
<accession>P0A0X2</accession>
<accession>Q9Z3E9</accession>
<name>RS11_XANCP</name>
<evidence type="ECO:0000255" key="1">
    <source>
        <dbReference type="HAMAP-Rule" id="MF_01310"/>
    </source>
</evidence>
<evidence type="ECO:0000305" key="2"/>
<dbReference type="EMBL" id="U79735">
    <property type="protein sequence ID" value="AAD00323.1"/>
    <property type="molecule type" value="Genomic_DNA"/>
</dbReference>
<dbReference type="EMBL" id="AE008922">
    <property type="protein sequence ID" value="AAM40227.1"/>
    <property type="molecule type" value="Genomic_DNA"/>
</dbReference>
<dbReference type="RefSeq" id="NP_636303.1">
    <property type="nucleotide sequence ID" value="NC_003902.1"/>
</dbReference>
<dbReference type="RefSeq" id="WP_003486671.1">
    <property type="nucleotide sequence ID" value="NC_003902.1"/>
</dbReference>
<dbReference type="SMR" id="P0A0X2"/>
<dbReference type="STRING" id="190485.XCC0917"/>
<dbReference type="EnsemblBacteria" id="AAM40227">
    <property type="protein sequence ID" value="AAM40227"/>
    <property type="gene ID" value="XCC0917"/>
</dbReference>
<dbReference type="GeneID" id="97509358"/>
<dbReference type="KEGG" id="xcc:XCC0917"/>
<dbReference type="PATRIC" id="fig|190485.4.peg.989"/>
<dbReference type="eggNOG" id="COG0100">
    <property type="taxonomic scope" value="Bacteria"/>
</dbReference>
<dbReference type="HOGENOM" id="CLU_072439_5_0_6"/>
<dbReference type="OrthoDB" id="9806415at2"/>
<dbReference type="PRO" id="PR:P0A0X2"/>
<dbReference type="Proteomes" id="UP000001010">
    <property type="component" value="Chromosome"/>
</dbReference>
<dbReference type="GO" id="GO:0022627">
    <property type="term" value="C:cytosolic small ribosomal subunit"/>
    <property type="evidence" value="ECO:0000318"/>
    <property type="project" value="GO_Central"/>
</dbReference>
<dbReference type="GO" id="GO:0019843">
    <property type="term" value="F:rRNA binding"/>
    <property type="evidence" value="ECO:0007669"/>
    <property type="project" value="UniProtKB-UniRule"/>
</dbReference>
<dbReference type="GO" id="GO:0003735">
    <property type="term" value="F:structural constituent of ribosome"/>
    <property type="evidence" value="ECO:0000318"/>
    <property type="project" value="GO_Central"/>
</dbReference>
<dbReference type="GO" id="GO:0006412">
    <property type="term" value="P:translation"/>
    <property type="evidence" value="ECO:0000318"/>
    <property type="project" value="GO_Central"/>
</dbReference>
<dbReference type="FunFam" id="3.30.420.80:FF:000001">
    <property type="entry name" value="30S ribosomal protein S11"/>
    <property type="match status" value="1"/>
</dbReference>
<dbReference type="Gene3D" id="3.30.420.80">
    <property type="entry name" value="Ribosomal protein S11"/>
    <property type="match status" value="1"/>
</dbReference>
<dbReference type="HAMAP" id="MF_01310">
    <property type="entry name" value="Ribosomal_uS11"/>
    <property type="match status" value="1"/>
</dbReference>
<dbReference type="InterPro" id="IPR001971">
    <property type="entry name" value="Ribosomal_uS11"/>
</dbReference>
<dbReference type="InterPro" id="IPR019981">
    <property type="entry name" value="Ribosomal_uS11_bac-type"/>
</dbReference>
<dbReference type="InterPro" id="IPR018102">
    <property type="entry name" value="Ribosomal_uS11_CS"/>
</dbReference>
<dbReference type="InterPro" id="IPR036967">
    <property type="entry name" value="Ribosomal_uS11_sf"/>
</dbReference>
<dbReference type="NCBIfam" id="NF003698">
    <property type="entry name" value="PRK05309.1"/>
    <property type="match status" value="1"/>
</dbReference>
<dbReference type="NCBIfam" id="TIGR03632">
    <property type="entry name" value="uS11_bact"/>
    <property type="match status" value="1"/>
</dbReference>
<dbReference type="PANTHER" id="PTHR11759">
    <property type="entry name" value="40S RIBOSOMAL PROTEIN S14/30S RIBOSOMAL PROTEIN S11"/>
    <property type="match status" value="1"/>
</dbReference>
<dbReference type="Pfam" id="PF00411">
    <property type="entry name" value="Ribosomal_S11"/>
    <property type="match status" value="1"/>
</dbReference>
<dbReference type="PIRSF" id="PIRSF002131">
    <property type="entry name" value="Ribosomal_S11"/>
    <property type="match status" value="1"/>
</dbReference>
<dbReference type="SUPFAM" id="SSF53137">
    <property type="entry name" value="Translational machinery components"/>
    <property type="match status" value="1"/>
</dbReference>
<dbReference type="PROSITE" id="PS00054">
    <property type="entry name" value="RIBOSOMAL_S11"/>
    <property type="match status" value="1"/>
</dbReference>